<evidence type="ECO:0000250" key="1">
    <source>
        <dbReference type="UniProtKB" id="Q8T126"/>
    </source>
</evidence>
<evidence type="ECO:0000255" key="2"/>
<evidence type="ECO:0000255" key="3">
    <source>
        <dbReference type="PROSITE-ProRule" id="PRU00159"/>
    </source>
</evidence>
<evidence type="ECO:0000305" key="4"/>
<evidence type="ECO:0000312" key="5">
    <source>
        <dbReference type="EMBL" id="EAL70511.1"/>
    </source>
</evidence>
<protein>
    <recommendedName>
        <fullName evidence="1">Probable inactive serine/threonine-protein kinase fnkD</fullName>
    </recommendedName>
    <alternativeName>
        <fullName>FNIP repeat-containing protein D</fullName>
    </alternativeName>
</protein>
<accession>Q557D1</accession>
<accession>Q86I02</accession>
<organism>
    <name type="scientific">Dictyostelium discoideum</name>
    <name type="common">Social amoeba</name>
    <dbReference type="NCBI Taxonomy" id="44689"/>
    <lineage>
        <taxon>Eukaryota</taxon>
        <taxon>Amoebozoa</taxon>
        <taxon>Evosea</taxon>
        <taxon>Eumycetozoa</taxon>
        <taxon>Dictyostelia</taxon>
        <taxon>Dictyosteliales</taxon>
        <taxon>Dictyosteliaceae</taxon>
        <taxon>Dictyostelium</taxon>
    </lineage>
</organism>
<name>FNKD_DICDI</name>
<sequence>MDIISTTFDQINTHIKFTNQKKIEFQNHIEKEWEIITQLESNEQFTVYMSKKLKGPNFTNNRFGLCTVKKIKSQYFNENEILNHIKLRDNKYVLKYYGCGKDNNQDVYIYLEFIEYSIPISKVKLIPNDSSIDNFNNVSNTIIELVTCKLVESLNCIHKDNKIVHGNIKGENILLVNDESEYGFSVKFINFSLNIGYEDSIHLDMFNLGCVLIQMLGCDCTKDENIDFLFSKIPNHLVEKFKKVISQLLSKNINNQILTDIISNKITTSLPKYSTLIGEPNDGLIYIGIQNNSDGLILPLFNQPICKKTFTYGVYYLSLSSFHRQLNVGVIPESIHTLELASFNQTILPGVIPTSVRTLKLPSYNKTLTQGSIPKGVRTLLLSSFNQPLTTDIIPKTVTILKLQSFNQPIEWGALPCSLVELSLASYKQPLQWGVIPYYISTLELPLASAPFSEGSIPSGVSKLIQQGEIQQINKPIKINNENNQNYMSCSQNEFDSKLTLILNSKITRESLFFGLKYLELSTFNQSFETLPIPETVEYLKLPMYNQPLTPKLLPSGIKFLILPSFNHPIRGESIPPSVIHLVFNKLFSVIESIPSSVKYLDLGDEYYVYPGHLLHSVLSFRSGLKFRVTDPIPYSQSLTNLNLYNFNIELLKNGISSNVTSLTLGSNFTNIESLSNLPSSVTNLSFGITTLNEKAISDITKYVKSTVTTITVNNEQIRKKIN</sequence>
<keyword id="KW-1185">Reference proteome</keyword>
<keyword id="KW-0677">Repeat</keyword>
<comment type="domain">
    <text evidence="2">The protein kinase domain is predicted to be catalytically inactive.</text>
</comment>
<comment type="similarity">
    <text evidence="2">Belongs to the protein kinase superfamily. STE Ser/Thr protein kinase family.</text>
</comment>
<comment type="caution">
    <text evidence="4">The gene for this protein is duplicated in strains AX3 and AX4. These strains contain a duplication of a segment of 750 kb of chromosome 2 compared to the corresponding sequence in strain AX2.</text>
</comment>
<proteinExistence type="inferred from homology"/>
<gene>
    <name type="primary">fnkD-1</name>
    <name evidence="1" type="synonym">FNIPK-D</name>
    <name type="ORF">DDB_G0273129</name>
</gene>
<gene>
    <name type="primary">fnkD-2</name>
    <name evidence="1" type="synonym">FNIPK-D</name>
    <name type="ORF">DDB_G0273641</name>
</gene>
<dbReference type="EMBL" id="AAFI02000011">
    <property type="protein sequence ID" value="EAL70511.1"/>
    <property type="molecule type" value="Genomic_DNA"/>
</dbReference>
<dbReference type="EMBL" id="AAFI02000009">
    <property type="protein sequence ID" value="EAL70782.1"/>
    <property type="molecule type" value="Genomic_DNA"/>
</dbReference>
<dbReference type="RefSeq" id="XP_644437.1">
    <property type="nucleotide sequence ID" value="XM_639345.1"/>
</dbReference>
<dbReference type="RefSeq" id="XP_644813.1">
    <property type="nucleotide sequence ID" value="XM_639721.1"/>
</dbReference>
<dbReference type="SMR" id="Q557D1"/>
<dbReference type="STRING" id="44689.Q557D1"/>
<dbReference type="PaxDb" id="44689-DDB0231208"/>
<dbReference type="EnsemblProtists" id="EAL70511">
    <property type="protein sequence ID" value="EAL70511"/>
    <property type="gene ID" value="DDB_G0273641"/>
</dbReference>
<dbReference type="EnsemblProtists" id="EAL70782">
    <property type="protein sequence ID" value="EAL70782"/>
    <property type="gene ID" value="DDB_G0273129"/>
</dbReference>
<dbReference type="GeneID" id="8618915"/>
<dbReference type="GeneID" id="8619062"/>
<dbReference type="KEGG" id="ddi:DDB_G0273129"/>
<dbReference type="KEGG" id="ddi:DDB_G0273641"/>
<dbReference type="dictyBase" id="DDB_G0273129">
    <property type="gene designation" value="fnkD-1"/>
</dbReference>
<dbReference type="dictyBase" id="DDB_G0273641">
    <property type="gene designation" value="fnkD-2"/>
</dbReference>
<dbReference type="VEuPathDB" id="AmoebaDB:DDB_G0273641"/>
<dbReference type="HOGENOM" id="CLU_382837_0_0_1"/>
<dbReference type="InParanoid" id="Q557D1"/>
<dbReference type="OMA" id="NDINCKE"/>
<dbReference type="PhylomeDB" id="Q557D1"/>
<dbReference type="PRO" id="PR:Q557D1"/>
<dbReference type="Proteomes" id="UP000002195">
    <property type="component" value="Chromosome 2"/>
</dbReference>
<dbReference type="GO" id="GO:0005524">
    <property type="term" value="F:ATP binding"/>
    <property type="evidence" value="ECO:0007669"/>
    <property type="project" value="InterPro"/>
</dbReference>
<dbReference type="GO" id="GO:0004672">
    <property type="term" value="F:protein kinase activity"/>
    <property type="evidence" value="ECO:0007669"/>
    <property type="project" value="InterPro"/>
</dbReference>
<dbReference type="Gene3D" id="1.10.510.10">
    <property type="entry name" value="Transferase(Phosphotransferase) domain 1"/>
    <property type="match status" value="1"/>
</dbReference>
<dbReference type="InterPro" id="IPR008615">
    <property type="entry name" value="FNIP"/>
</dbReference>
<dbReference type="InterPro" id="IPR011009">
    <property type="entry name" value="Kinase-like_dom_sf"/>
</dbReference>
<dbReference type="InterPro" id="IPR000719">
    <property type="entry name" value="Prot_kinase_dom"/>
</dbReference>
<dbReference type="InterPro" id="IPR051251">
    <property type="entry name" value="STK_FNIP-Repeat"/>
</dbReference>
<dbReference type="PANTHER" id="PTHR32134">
    <property type="entry name" value="FNIP REPEAT-CONTAINING PROTEIN"/>
    <property type="match status" value="1"/>
</dbReference>
<dbReference type="PANTHER" id="PTHR32134:SF173">
    <property type="entry name" value="FNIP REPEAT-CONTAINING PROTEIN-RELATED"/>
    <property type="match status" value="1"/>
</dbReference>
<dbReference type="Pfam" id="PF05725">
    <property type="entry name" value="FNIP"/>
    <property type="match status" value="5"/>
</dbReference>
<dbReference type="SMART" id="SM00220">
    <property type="entry name" value="S_TKc"/>
    <property type="match status" value="1"/>
</dbReference>
<dbReference type="SUPFAM" id="SSF56112">
    <property type="entry name" value="Protein kinase-like (PK-like)"/>
    <property type="match status" value="1"/>
</dbReference>
<dbReference type="PROSITE" id="PS50011">
    <property type="entry name" value="PROTEIN_KINASE_DOM"/>
    <property type="match status" value="1"/>
</dbReference>
<reference key="1">
    <citation type="journal article" date="2002" name="Nature">
        <title>Sequence and analysis of chromosome 2 of Dictyostelium discoideum.</title>
        <authorList>
            <person name="Gloeckner G."/>
            <person name="Eichinger L."/>
            <person name="Szafranski K."/>
            <person name="Pachebat J.A."/>
            <person name="Bankier A.T."/>
            <person name="Dear P.H."/>
            <person name="Lehmann R."/>
            <person name="Baumgart C."/>
            <person name="Parra G."/>
            <person name="Abril J.F."/>
            <person name="Guigo R."/>
            <person name="Kumpf K."/>
            <person name="Tunggal B."/>
            <person name="Cox E.C."/>
            <person name="Quail M.A."/>
            <person name="Platzer M."/>
            <person name="Rosenthal A."/>
            <person name="Noegel A.A."/>
        </authorList>
    </citation>
    <scope>NUCLEOTIDE SEQUENCE [LARGE SCALE GENOMIC DNA]</scope>
    <source>
        <strain>AX4</strain>
    </source>
</reference>
<reference evidence="5" key="2">
    <citation type="journal article" date="2005" name="Nature">
        <title>The genome of the social amoeba Dictyostelium discoideum.</title>
        <authorList>
            <person name="Eichinger L."/>
            <person name="Pachebat J.A."/>
            <person name="Gloeckner G."/>
            <person name="Rajandream M.A."/>
            <person name="Sucgang R."/>
            <person name="Berriman M."/>
            <person name="Song J."/>
            <person name="Olsen R."/>
            <person name="Szafranski K."/>
            <person name="Xu Q."/>
            <person name="Tunggal B."/>
            <person name="Kummerfeld S."/>
            <person name="Madera M."/>
            <person name="Konfortov B.A."/>
            <person name="Rivero F."/>
            <person name="Bankier A.T."/>
            <person name="Lehmann R."/>
            <person name="Hamlin N."/>
            <person name="Davies R."/>
            <person name="Gaudet P."/>
            <person name="Fey P."/>
            <person name="Pilcher K."/>
            <person name="Chen G."/>
            <person name="Saunders D."/>
            <person name="Sodergren E.J."/>
            <person name="Davis P."/>
            <person name="Kerhornou A."/>
            <person name="Nie X."/>
            <person name="Hall N."/>
            <person name="Anjard C."/>
            <person name="Hemphill L."/>
            <person name="Bason N."/>
            <person name="Farbrother P."/>
            <person name="Desany B."/>
            <person name="Just E."/>
            <person name="Morio T."/>
            <person name="Rost R."/>
            <person name="Churcher C.M."/>
            <person name="Cooper J."/>
            <person name="Haydock S."/>
            <person name="van Driessche N."/>
            <person name="Cronin A."/>
            <person name="Goodhead I."/>
            <person name="Muzny D.M."/>
            <person name="Mourier T."/>
            <person name="Pain A."/>
            <person name="Lu M."/>
            <person name="Harper D."/>
            <person name="Lindsay R."/>
            <person name="Hauser H."/>
            <person name="James K.D."/>
            <person name="Quiles M."/>
            <person name="Madan Babu M."/>
            <person name="Saito T."/>
            <person name="Buchrieser C."/>
            <person name="Wardroper A."/>
            <person name="Felder M."/>
            <person name="Thangavelu M."/>
            <person name="Johnson D."/>
            <person name="Knights A."/>
            <person name="Loulseged H."/>
            <person name="Mungall K.L."/>
            <person name="Oliver K."/>
            <person name="Price C."/>
            <person name="Quail M.A."/>
            <person name="Urushihara H."/>
            <person name="Hernandez J."/>
            <person name="Rabbinowitsch E."/>
            <person name="Steffen D."/>
            <person name="Sanders M."/>
            <person name="Ma J."/>
            <person name="Kohara Y."/>
            <person name="Sharp S."/>
            <person name="Simmonds M.N."/>
            <person name="Spiegler S."/>
            <person name="Tivey A."/>
            <person name="Sugano S."/>
            <person name="White B."/>
            <person name="Walker D."/>
            <person name="Woodward J.R."/>
            <person name="Winckler T."/>
            <person name="Tanaka Y."/>
            <person name="Shaulsky G."/>
            <person name="Schleicher M."/>
            <person name="Weinstock G.M."/>
            <person name="Rosenthal A."/>
            <person name="Cox E.C."/>
            <person name="Chisholm R.L."/>
            <person name="Gibbs R.A."/>
            <person name="Loomis W.F."/>
            <person name="Platzer M."/>
            <person name="Kay R.R."/>
            <person name="Williams J.G."/>
            <person name="Dear P.H."/>
            <person name="Noegel A.A."/>
            <person name="Barrell B.G."/>
            <person name="Kuspa A."/>
        </authorList>
    </citation>
    <scope>NUCLEOTIDE SEQUENCE [LARGE SCALE GENOMIC DNA]</scope>
    <source>
        <strain evidence="5">AX4</strain>
    </source>
</reference>
<feature type="chain" id="PRO_0000379439" description="Probable inactive serine/threonine-protein kinase fnkD">
    <location>
        <begin position="1"/>
        <end position="723"/>
    </location>
</feature>
<feature type="domain" description="Protein kinase" evidence="3">
    <location>
        <begin position="33"/>
        <end position="276"/>
    </location>
</feature>
<feature type="repeat" description="FNIP 1" evidence="2">
    <location>
        <begin position="301"/>
        <end position="342"/>
    </location>
</feature>
<feature type="repeat" description="FNIP 2" evidence="2">
    <location>
        <begin position="343"/>
        <end position="384"/>
    </location>
</feature>
<feature type="repeat" description="FNIP 3" evidence="2">
    <location>
        <begin position="385"/>
        <end position="426"/>
    </location>
</feature>
<feature type="repeat" description="FNIP 4" evidence="2">
    <location>
        <begin position="524"/>
        <end position="565"/>
    </location>
</feature>
<feature type="repeat" description="FNIP 5" evidence="2">
    <location>
        <begin position="566"/>
        <end position="606"/>
    </location>
</feature>
<feature type="repeat" description="FNIP 6" evidence="2">
    <location>
        <begin position="647"/>
        <end position="690"/>
    </location>
</feature>